<accession>Q9PQ74</accession>
<keyword id="KW-0963">Cytoplasm</keyword>
<keyword id="KW-0235">DNA replication</keyword>
<keyword id="KW-0239">DNA-directed DNA polymerase</keyword>
<keyword id="KW-0548">Nucleotidyltransferase</keyword>
<keyword id="KW-1185">Reference proteome</keyword>
<keyword id="KW-0808">Transferase</keyword>
<protein>
    <recommendedName>
        <fullName>DNA polymerase III subunit alpha</fullName>
        <ecNumber>2.7.7.7</ecNumber>
    </recommendedName>
</protein>
<feature type="chain" id="PRO_0000103357" description="DNA polymerase III subunit alpha">
    <location>
        <begin position="1"/>
        <end position="969"/>
    </location>
</feature>
<gene>
    <name type="primary">dnaE</name>
    <name type="ordered locus">UU415</name>
</gene>
<dbReference type="EC" id="2.7.7.7"/>
<dbReference type="EMBL" id="AF222894">
    <property type="protein sequence ID" value="AAF30826.1"/>
    <property type="molecule type" value="Genomic_DNA"/>
</dbReference>
<dbReference type="RefSeq" id="WP_006688481.1">
    <property type="nucleotide sequence ID" value="NC_002162.1"/>
</dbReference>
<dbReference type="SMR" id="Q9PQ74"/>
<dbReference type="STRING" id="273119.UU415"/>
<dbReference type="EnsemblBacteria" id="AAF30826">
    <property type="protein sequence ID" value="AAF30826"/>
    <property type="gene ID" value="UU415"/>
</dbReference>
<dbReference type="GeneID" id="29672555"/>
<dbReference type="KEGG" id="uur:UU415"/>
<dbReference type="eggNOG" id="COG0587">
    <property type="taxonomic scope" value="Bacteria"/>
</dbReference>
<dbReference type="HOGENOM" id="CLU_001600_0_1_14"/>
<dbReference type="OrthoDB" id="9803237at2"/>
<dbReference type="Proteomes" id="UP000000423">
    <property type="component" value="Chromosome"/>
</dbReference>
<dbReference type="GO" id="GO:0005737">
    <property type="term" value="C:cytoplasm"/>
    <property type="evidence" value="ECO:0007669"/>
    <property type="project" value="UniProtKB-SubCell"/>
</dbReference>
<dbReference type="GO" id="GO:0008408">
    <property type="term" value="F:3'-5' exonuclease activity"/>
    <property type="evidence" value="ECO:0007669"/>
    <property type="project" value="InterPro"/>
</dbReference>
<dbReference type="GO" id="GO:0003887">
    <property type="term" value="F:DNA-directed DNA polymerase activity"/>
    <property type="evidence" value="ECO:0007669"/>
    <property type="project" value="UniProtKB-KW"/>
</dbReference>
<dbReference type="GO" id="GO:0006260">
    <property type="term" value="P:DNA replication"/>
    <property type="evidence" value="ECO:0007669"/>
    <property type="project" value="UniProtKB-KW"/>
</dbReference>
<dbReference type="CDD" id="cd07431">
    <property type="entry name" value="PHP_PolIIIA"/>
    <property type="match status" value="1"/>
</dbReference>
<dbReference type="Gene3D" id="1.10.150.870">
    <property type="match status" value="1"/>
</dbReference>
<dbReference type="Gene3D" id="1.10.10.1600">
    <property type="entry name" value="Bacterial DNA polymerase III alpha subunit, thumb domain"/>
    <property type="match status" value="1"/>
</dbReference>
<dbReference type="Gene3D" id="3.20.20.140">
    <property type="entry name" value="Metal-dependent hydrolases"/>
    <property type="match status" value="1"/>
</dbReference>
<dbReference type="InterPro" id="IPR011708">
    <property type="entry name" value="DNA_pol3_alpha_NTPase_dom"/>
</dbReference>
<dbReference type="InterPro" id="IPR041931">
    <property type="entry name" value="DNA_pol3_alpha_thumb_dom"/>
</dbReference>
<dbReference type="InterPro" id="IPR040982">
    <property type="entry name" value="DNA_pol3_finger"/>
</dbReference>
<dbReference type="InterPro" id="IPR004805">
    <property type="entry name" value="DnaE2/DnaE/PolC"/>
</dbReference>
<dbReference type="InterPro" id="IPR029460">
    <property type="entry name" value="DNAPol_HHH"/>
</dbReference>
<dbReference type="InterPro" id="IPR004013">
    <property type="entry name" value="PHP_dom"/>
</dbReference>
<dbReference type="InterPro" id="IPR003141">
    <property type="entry name" value="Pol/His_phosphatase_N"/>
</dbReference>
<dbReference type="InterPro" id="IPR016195">
    <property type="entry name" value="Pol/histidinol_Pase-like"/>
</dbReference>
<dbReference type="NCBIfam" id="TIGR00594">
    <property type="entry name" value="polc"/>
    <property type="match status" value="1"/>
</dbReference>
<dbReference type="NCBIfam" id="NF004550">
    <property type="entry name" value="PRK05898.1"/>
    <property type="match status" value="1"/>
</dbReference>
<dbReference type="PANTHER" id="PTHR32294">
    <property type="entry name" value="DNA POLYMERASE III SUBUNIT ALPHA"/>
    <property type="match status" value="1"/>
</dbReference>
<dbReference type="PANTHER" id="PTHR32294:SF0">
    <property type="entry name" value="DNA POLYMERASE III SUBUNIT ALPHA"/>
    <property type="match status" value="1"/>
</dbReference>
<dbReference type="Pfam" id="PF07733">
    <property type="entry name" value="DNA_pol3_alpha"/>
    <property type="match status" value="1"/>
</dbReference>
<dbReference type="Pfam" id="PF17657">
    <property type="entry name" value="DNA_pol3_finger"/>
    <property type="match status" value="1"/>
</dbReference>
<dbReference type="Pfam" id="PF14579">
    <property type="entry name" value="HHH_6"/>
    <property type="match status" value="1"/>
</dbReference>
<dbReference type="Pfam" id="PF02811">
    <property type="entry name" value="PHP"/>
    <property type="match status" value="1"/>
</dbReference>
<dbReference type="SMART" id="SM00481">
    <property type="entry name" value="POLIIIAc"/>
    <property type="match status" value="1"/>
</dbReference>
<dbReference type="SUPFAM" id="SSF89550">
    <property type="entry name" value="PHP domain-like"/>
    <property type="match status" value="1"/>
</dbReference>
<organism>
    <name type="scientific">Ureaplasma parvum serovar 3 (strain ATCC 700970)</name>
    <dbReference type="NCBI Taxonomy" id="273119"/>
    <lineage>
        <taxon>Bacteria</taxon>
        <taxon>Bacillati</taxon>
        <taxon>Mycoplasmatota</taxon>
        <taxon>Mycoplasmoidales</taxon>
        <taxon>Mycoplasmoidaceae</taxon>
        <taxon>Ureaplasma</taxon>
    </lineage>
</organism>
<evidence type="ECO:0000250" key="1"/>
<evidence type="ECO:0000305" key="2"/>
<reference key="1">
    <citation type="journal article" date="2000" name="Nature">
        <title>The complete sequence of the mucosal pathogen Ureaplasma urealyticum.</title>
        <authorList>
            <person name="Glass J.I."/>
            <person name="Lefkowitz E.J."/>
            <person name="Glass J.S."/>
            <person name="Heiner C.R."/>
            <person name="Chen E.Y."/>
            <person name="Cassell G.H."/>
        </authorList>
    </citation>
    <scope>NUCLEOTIDE SEQUENCE [LARGE SCALE GENOMIC DNA]</scope>
    <source>
        <strain>ATCC 700970</strain>
    </source>
</reference>
<name>DPO3A_UREPA</name>
<sequence>MFINLNVHSHYSLLNSTLSIDDLIKYALDNKQPYVCLTDLNNMYGCIEFYDKAKAHNLTPIIGLEFEYQNATLVAYAKNYNGYLKLIKWSSWIMTSKEFEIQDDFDDLIIVCKKGTIVFKSPNFYQTHDQNAPNAIALQSVFYANKNDKIVFLAMLAIKNDLKLEDFKNCCDFDNNHFLNDNLAQSFFSPIALNNLNKVLNELKVQIHDLPINIPVYDKQNSIISSEILKQLCISGLKKRLNANDGQVNKIYVQRLKYELDVINEKQFDDYFLIVYDFINFAKSNGIIVGPGRGSAAGSLVAYCLHITDIDPIKHNLIFERFLNPTRKSMPDIDTDIMDEKRDLVIEYLFEKYGNDHVAYILTFQRLKAKMAIRDVGRILGIDLKVIDKICKNIKPEYDEDLDLAIKKNTILKEMYLLHKELFEISKKLINAPRQIGTHAAGIILSDSLISNIIPIQLGINDRPLSQYSMEYLERFGLIKMDLLGLKNLTIIDNVLKMIYENQNKKIDLFNINYNDKFVFEDLAKARTNGIFQLESPGMKKVLLKVKPQNIEDISIVSALFRPGPQQNIKTFVERRFKREEFSYWNEATRKILEPTYGIIVYQEQVIELVKTIANFDIATSDNFRRAISKKDEKILIQLKDDFINGALNNNYKQPLVNQIFEYIFSFAHYGFNHSHSLAYSYISYWLAYLKHYYTLEFLSVLLSHTSASKDKLLSYLNEAKEFNISIKGPDIQYFSNDFVIDTQKQIIRFGFKTIKGFGDELLKKIKSALQKSTLSDYISYIDALKKGNVSLKNIEILIRVGTFDSFGINRLFLLNNLNEIFEKTGLNGHFFDLNLVGLDYAKDMSVNDRYLDDEIQYLGIDLNSLNYANYKTEIDYNKLKYTIKDFYEINTNYETNILAQVLNIKQSKTKNGNDIFYLETLIDNKKQTLTIFQNSKYLIDEISIGGIYVFGVKLLNHFNFIVNIKQRI</sequence>
<proteinExistence type="inferred from homology"/>
<comment type="function">
    <text evidence="1">DNA polymerase III is a complex, multichain enzyme responsible for most of the replicative synthesis in bacteria. This DNA polymerase also exhibits 3' to 5' exonuclease activity. The alpha chain is the DNA polymerase (By similarity).</text>
</comment>
<comment type="catalytic activity">
    <reaction>
        <text>DNA(n) + a 2'-deoxyribonucleoside 5'-triphosphate = DNA(n+1) + diphosphate</text>
        <dbReference type="Rhea" id="RHEA:22508"/>
        <dbReference type="Rhea" id="RHEA-COMP:17339"/>
        <dbReference type="Rhea" id="RHEA-COMP:17340"/>
        <dbReference type="ChEBI" id="CHEBI:33019"/>
        <dbReference type="ChEBI" id="CHEBI:61560"/>
        <dbReference type="ChEBI" id="CHEBI:173112"/>
        <dbReference type="EC" id="2.7.7.7"/>
    </reaction>
</comment>
<comment type="subunit">
    <text evidence="1">DNA polymerase III contains a core (composed of alpha, epsilon and theta chains) that associates with a tau subunit. This core dimerizes to form the PolIII' complex. PolIII' associates with the gamma complex (composed of gamma, delta, delta', psi and chi chains) and with the beta chain to form the complete DNA polymerase III complex (By similarity).</text>
</comment>
<comment type="subcellular location">
    <subcellularLocation>
        <location evidence="1">Cytoplasm</location>
    </subcellularLocation>
</comment>
<comment type="similarity">
    <text evidence="2">Belongs to the DNA polymerase type-C family. DnaE subfamily.</text>
</comment>